<sequence length="318" mass="36110">MNRFTRYDVTPEAIFNQRRQIIKAMGLGAAALSLPNIGFAAEKSDQLKALNFKDAPKGDFLLTPENKVTGYNNFYEFGVDKASPAKFAKDFKTDPWSLEIAGEVENPFVLNHAQLFNTFPLEERIYRFRCVEAWSMVIPWVGFELARLVEMAKPTSKAKFVIFHTLHDPEQMPGQKNKFFGGGIDYPYVEALTIEEAMNPLTLLSVGLYGKMLPPQNGAPIRLVVPWKYGFKSIKSIVKITFSETRPRTTWEKLAPHEYGFYANVNPNVDHPRWSQASERVIGSGGLLAVKRQDTLMFNGYEKEVAHLYKGLDLKVNF</sequence>
<organism>
    <name type="scientific">Actinobacillus pleuropneumoniae serotype 5b (strain L20)</name>
    <dbReference type="NCBI Taxonomy" id="416269"/>
    <lineage>
        <taxon>Bacteria</taxon>
        <taxon>Pseudomonadati</taxon>
        <taxon>Pseudomonadota</taxon>
        <taxon>Gammaproteobacteria</taxon>
        <taxon>Pasteurellales</taxon>
        <taxon>Pasteurellaceae</taxon>
        <taxon>Actinobacillus</taxon>
    </lineage>
</organism>
<feature type="signal peptide" description="Tat-type signal" evidence="1">
    <location>
        <begin position="1"/>
        <end position="40"/>
    </location>
</feature>
<feature type="chain" id="PRO_1000066154" description="Protein-methionine-sulfoxide reductase catalytic subunit MsrP" evidence="1">
    <location>
        <begin position="41"/>
        <end position="318"/>
    </location>
</feature>
<feature type="binding site" evidence="1">
    <location>
        <position position="72"/>
    </location>
    <ligand>
        <name>Mo-molybdopterin</name>
        <dbReference type="ChEBI" id="CHEBI:71302"/>
    </ligand>
</feature>
<feature type="binding site" evidence="1">
    <location>
        <begin position="75"/>
        <end position="76"/>
    </location>
    <ligand>
        <name>Mo-molybdopterin</name>
        <dbReference type="ChEBI" id="CHEBI:71302"/>
    </ligand>
</feature>
<feature type="binding site" evidence="1">
    <location>
        <position position="130"/>
    </location>
    <ligand>
        <name>Mo-molybdopterin</name>
        <dbReference type="ChEBI" id="CHEBI:71302"/>
    </ligand>
    <ligandPart>
        <name>Mo</name>
        <dbReference type="ChEBI" id="CHEBI:28685"/>
    </ligandPart>
</feature>
<feature type="binding site" evidence="1">
    <location>
        <position position="165"/>
    </location>
    <ligand>
        <name>Mo-molybdopterin</name>
        <dbReference type="ChEBI" id="CHEBI:71302"/>
    </ligand>
</feature>
<feature type="binding site" evidence="1">
    <location>
        <position position="217"/>
    </location>
    <ligand>
        <name>Mo-molybdopterin</name>
        <dbReference type="ChEBI" id="CHEBI:71302"/>
    </ligand>
</feature>
<feature type="binding site" evidence="1">
    <location>
        <position position="222"/>
    </location>
    <ligand>
        <name>Mo-molybdopterin</name>
        <dbReference type="ChEBI" id="CHEBI:71302"/>
    </ligand>
</feature>
<feature type="binding site" evidence="1">
    <location>
        <begin position="233"/>
        <end position="235"/>
    </location>
    <ligand>
        <name>Mo-molybdopterin</name>
        <dbReference type="ChEBI" id="CHEBI:71302"/>
    </ligand>
</feature>
<protein>
    <recommendedName>
        <fullName evidence="1">Protein-methionine-sulfoxide reductase catalytic subunit MsrP</fullName>
        <ecNumber evidence="1">1.8.5.-</ecNumber>
    </recommendedName>
</protein>
<dbReference type="EC" id="1.8.5.-" evidence="1"/>
<dbReference type="EMBL" id="CP000569">
    <property type="protein sequence ID" value="ABN74914.1"/>
    <property type="molecule type" value="Genomic_DNA"/>
</dbReference>
<dbReference type="RefSeq" id="WP_005619040.1">
    <property type="nucleotide sequence ID" value="NC_009053.1"/>
</dbReference>
<dbReference type="SMR" id="A3N3C8"/>
<dbReference type="STRING" id="416269.APL_1832"/>
<dbReference type="EnsemblBacteria" id="ABN74914">
    <property type="protein sequence ID" value="ABN74914"/>
    <property type="gene ID" value="APL_1832"/>
</dbReference>
<dbReference type="GeneID" id="48600128"/>
<dbReference type="KEGG" id="apl:APL_1832"/>
<dbReference type="eggNOG" id="COG2041">
    <property type="taxonomic scope" value="Bacteria"/>
</dbReference>
<dbReference type="HOGENOM" id="CLU_045520_0_0_6"/>
<dbReference type="Proteomes" id="UP000001432">
    <property type="component" value="Chromosome"/>
</dbReference>
<dbReference type="GO" id="GO:0042597">
    <property type="term" value="C:periplasmic space"/>
    <property type="evidence" value="ECO:0007669"/>
    <property type="project" value="UniProtKB-SubCell"/>
</dbReference>
<dbReference type="GO" id="GO:0046872">
    <property type="term" value="F:metal ion binding"/>
    <property type="evidence" value="ECO:0007669"/>
    <property type="project" value="UniProtKB-KW"/>
</dbReference>
<dbReference type="GO" id="GO:0043546">
    <property type="term" value="F:molybdopterin cofactor binding"/>
    <property type="evidence" value="ECO:0007669"/>
    <property type="project" value="UniProtKB-UniRule"/>
</dbReference>
<dbReference type="GO" id="GO:0016672">
    <property type="term" value="F:oxidoreductase activity, acting on a sulfur group of donors, quinone or similar compound as acceptor"/>
    <property type="evidence" value="ECO:0007669"/>
    <property type="project" value="UniProtKB-UniRule"/>
</dbReference>
<dbReference type="GO" id="GO:0030091">
    <property type="term" value="P:protein repair"/>
    <property type="evidence" value="ECO:0007669"/>
    <property type="project" value="UniProtKB-UniRule"/>
</dbReference>
<dbReference type="Gene3D" id="3.90.420.10">
    <property type="entry name" value="Oxidoreductase, molybdopterin-binding domain"/>
    <property type="match status" value="1"/>
</dbReference>
<dbReference type="HAMAP" id="MF_01206">
    <property type="entry name" value="MsrP"/>
    <property type="match status" value="1"/>
</dbReference>
<dbReference type="InterPro" id="IPR022867">
    <property type="entry name" value="MsrP"/>
</dbReference>
<dbReference type="InterPro" id="IPR000572">
    <property type="entry name" value="OxRdtase_Mopterin-bd_dom"/>
</dbReference>
<dbReference type="InterPro" id="IPR036374">
    <property type="entry name" value="OxRdtase_Mopterin-bd_sf"/>
</dbReference>
<dbReference type="NCBIfam" id="NF003767">
    <property type="entry name" value="PRK05363.1"/>
    <property type="match status" value="1"/>
</dbReference>
<dbReference type="PANTHER" id="PTHR43032">
    <property type="entry name" value="PROTEIN-METHIONINE-SULFOXIDE REDUCTASE"/>
    <property type="match status" value="1"/>
</dbReference>
<dbReference type="PANTHER" id="PTHR43032:SF3">
    <property type="entry name" value="PROTEIN-METHIONINE-SULFOXIDE REDUCTASE CATALYTIC SUBUNIT MSRP"/>
    <property type="match status" value="1"/>
</dbReference>
<dbReference type="Pfam" id="PF00174">
    <property type="entry name" value="Oxidored_molyb"/>
    <property type="match status" value="1"/>
</dbReference>
<dbReference type="SUPFAM" id="SSF56524">
    <property type="entry name" value="Oxidoreductase molybdopterin-binding domain"/>
    <property type="match status" value="1"/>
</dbReference>
<accession>A3N3C8</accession>
<name>MSRP_ACTP2</name>
<reference key="1">
    <citation type="journal article" date="2008" name="J. Bacteriol.">
        <title>The complete genome sequence of Actinobacillus pleuropneumoniae L20 (serotype 5b).</title>
        <authorList>
            <person name="Foote S.J."/>
            <person name="Bosse J.T."/>
            <person name="Bouevitch A.B."/>
            <person name="Langford P.R."/>
            <person name="Young N.M."/>
            <person name="Nash J.H.E."/>
        </authorList>
    </citation>
    <scope>NUCLEOTIDE SEQUENCE [LARGE SCALE GENOMIC DNA]</scope>
    <source>
        <strain>L20</strain>
    </source>
</reference>
<comment type="function">
    <text evidence="1">Part of the MsrPQ system that repairs oxidized periplasmic proteins containing methionine sulfoxide residues (Met-O), using respiratory chain electrons. Thus protects these proteins from oxidative-stress damage caused by reactive species of oxygen and chlorine generated by the host defense mechanisms. MsrPQ is essential for the maintenance of envelope integrity under bleach stress, rescuing a wide series of structurally unrelated periplasmic proteins from methionine oxidation. The catalytic subunit MsrP is non-stereospecific, being able to reduce both (R-) and (S-) diastereoisomers of methionine sulfoxide.</text>
</comment>
<comment type="catalytic activity">
    <reaction evidence="1">
        <text>L-methionyl-[protein] + a quinone + H2O = L-methionyl-(S)-S-oxide-[protein] + a quinol</text>
        <dbReference type="Rhea" id="RHEA:51292"/>
        <dbReference type="Rhea" id="RHEA-COMP:12313"/>
        <dbReference type="Rhea" id="RHEA-COMP:12315"/>
        <dbReference type="ChEBI" id="CHEBI:15377"/>
        <dbReference type="ChEBI" id="CHEBI:16044"/>
        <dbReference type="ChEBI" id="CHEBI:24646"/>
        <dbReference type="ChEBI" id="CHEBI:44120"/>
        <dbReference type="ChEBI" id="CHEBI:132124"/>
    </reaction>
</comment>
<comment type="catalytic activity">
    <reaction evidence="1">
        <text>L-methionyl-[protein] + a quinone + H2O = L-methionyl-(R)-S-oxide-[protein] + a quinol</text>
        <dbReference type="Rhea" id="RHEA:51296"/>
        <dbReference type="Rhea" id="RHEA-COMP:12313"/>
        <dbReference type="Rhea" id="RHEA-COMP:12314"/>
        <dbReference type="ChEBI" id="CHEBI:15377"/>
        <dbReference type="ChEBI" id="CHEBI:16044"/>
        <dbReference type="ChEBI" id="CHEBI:24646"/>
        <dbReference type="ChEBI" id="CHEBI:45764"/>
        <dbReference type="ChEBI" id="CHEBI:132124"/>
    </reaction>
</comment>
<comment type="cofactor">
    <cofactor evidence="1">
        <name>Mo-molybdopterin</name>
        <dbReference type="ChEBI" id="CHEBI:71302"/>
    </cofactor>
    <text evidence="1">Binds 1 Mo-molybdopterin (Mo-MPT) cofactor per subunit.</text>
</comment>
<comment type="subunit">
    <text evidence="1">Heterodimer of a catalytic subunit (MsrP) and a heme-binding subunit (MsrQ).</text>
</comment>
<comment type="subcellular location">
    <subcellularLocation>
        <location evidence="1">Periplasm</location>
    </subcellularLocation>
    <text evidence="1">Is attached to the inner membrane when interacting with the MsrQ subunit.</text>
</comment>
<comment type="PTM">
    <text evidence="1">Predicted to be exported by the Tat system. The position of the signal peptide cleavage has not been experimentally proven.</text>
</comment>
<comment type="similarity">
    <text evidence="1">Belongs to the MsrP family.</text>
</comment>
<gene>
    <name evidence="1" type="primary">msrP</name>
    <name type="ordered locus">APL_1832</name>
</gene>
<keyword id="KW-0479">Metal-binding</keyword>
<keyword id="KW-0500">Molybdenum</keyword>
<keyword id="KW-0560">Oxidoreductase</keyword>
<keyword id="KW-0574">Periplasm</keyword>
<keyword id="KW-1185">Reference proteome</keyword>
<keyword id="KW-0732">Signal</keyword>
<proteinExistence type="inferred from homology"/>
<evidence type="ECO:0000255" key="1">
    <source>
        <dbReference type="HAMAP-Rule" id="MF_01206"/>
    </source>
</evidence>